<name>UPPP_THET8</name>
<accession>Q5SLX1</accession>
<comment type="function">
    <text evidence="1">Catalyzes the dephosphorylation of undecaprenyl diphosphate (UPP). Confers resistance to bacitracin.</text>
</comment>
<comment type="catalytic activity">
    <reaction evidence="1">
        <text>di-trans,octa-cis-undecaprenyl diphosphate + H2O = di-trans,octa-cis-undecaprenyl phosphate + phosphate + H(+)</text>
        <dbReference type="Rhea" id="RHEA:28094"/>
        <dbReference type="ChEBI" id="CHEBI:15377"/>
        <dbReference type="ChEBI" id="CHEBI:15378"/>
        <dbReference type="ChEBI" id="CHEBI:43474"/>
        <dbReference type="ChEBI" id="CHEBI:58405"/>
        <dbReference type="ChEBI" id="CHEBI:60392"/>
        <dbReference type="EC" id="3.6.1.27"/>
    </reaction>
</comment>
<comment type="subcellular location">
    <subcellularLocation>
        <location evidence="1">Cell inner membrane</location>
        <topology evidence="1">Multi-pass membrane protein</topology>
    </subcellularLocation>
</comment>
<comment type="miscellaneous">
    <text>Bacitracin is thought to be involved in the inhibition of peptidoglycan synthesis by sequestering undecaprenyl diphosphate, thereby reducing the pool of lipid carrier available.</text>
</comment>
<comment type="similarity">
    <text evidence="1">Belongs to the UppP family.</text>
</comment>
<keyword id="KW-0046">Antibiotic resistance</keyword>
<keyword id="KW-0997">Cell inner membrane</keyword>
<keyword id="KW-1003">Cell membrane</keyword>
<keyword id="KW-0133">Cell shape</keyword>
<keyword id="KW-0961">Cell wall biogenesis/degradation</keyword>
<keyword id="KW-0378">Hydrolase</keyword>
<keyword id="KW-0472">Membrane</keyword>
<keyword id="KW-0573">Peptidoglycan synthesis</keyword>
<keyword id="KW-1185">Reference proteome</keyword>
<keyword id="KW-0812">Transmembrane</keyword>
<keyword id="KW-1133">Transmembrane helix</keyword>
<feature type="chain" id="PRO_0000151229" description="Undecaprenyl-diphosphatase">
    <location>
        <begin position="1"/>
        <end position="261"/>
    </location>
</feature>
<feature type="transmembrane region" description="Helical" evidence="1">
    <location>
        <begin position="9"/>
        <end position="31"/>
    </location>
</feature>
<feature type="transmembrane region" description="Helical" evidence="1">
    <location>
        <begin position="46"/>
        <end position="66"/>
    </location>
</feature>
<feature type="transmembrane region" description="Helical" evidence="1">
    <location>
        <begin position="80"/>
        <end position="100"/>
    </location>
</feature>
<feature type="transmembrane region" description="Helical" evidence="1">
    <location>
        <begin position="102"/>
        <end position="122"/>
    </location>
</feature>
<feature type="transmembrane region" description="Helical" evidence="1">
    <location>
        <begin position="137"/>
        <end position="157"/>
    </location>
</feature>
<feature type="transmembrane region" description="Helical" evidence="1">
    <location>
        <begin position="180"/>
        <end position="200"/>
    </location>
</feature>
<feature type="transmembrane region" description="Helical" evidence="1">
    <location>
        <begin position="209"/>
        <end position="229"/>
    </location>
</feature>
<feature type="transmembrane region" description="Helical" evidence="1">
    <location>
        <begin position="240"/>
        <end position="260"/>
    </location>
</feature>
<reference key="1">
    <citation type="submission" date="2004-11" db="EMBL/GenBank/DDBJ databases">
        <title>Complete genome sequence of Thermus thermophilus HB8.</title>
        <authorList>
            <person name="Masui R."/>
            <person name="Kurokawa K."/>
            <person name="Nakagawa N."/>
            <person name="Tokunaga F."/>
            <person name="Koyama Y."/>
            <person name="Shibata T."/>
            <person name="Oshima T."/>
            <person name="Yokoyama S."/>
            <person name="Yasunaga T."/>
            <person name="Kuramitsu S."/>
        </authorList>
    </citation>
    <scope>NUCLEOTIDE SEQUENCE [LARGE SCALE GENOMIC DNA]</scope>
    <source>
        <strain>ATCC 27634 / DSM 579 / HB8</strain>
    </source>
</reference>
<sequence length="261" mass="28345">MGRVSAWEALLLGVVEGLTEFLPVSSTGHLTLLFHLLGLPVEEDPFLKTFLVAIQLGAILAVLLLYGRRLAADRALWLRIAVAFVPTGVIGFLFYPLIKGVILGNDAVVAFFLFFVGAVLLFADRLAERAQYQDVKALPLARVAWIGVFQGLAALFPGTSRSGATILGGLLLGLNRQAAAEFSFLLALPTMFAAVGYDLWKSAPEVPEGGWSLLLLGFLAALVTALVTVRWMLAFVARHGFRPFALYRMALAAVYAFFFLR</sequence>
<organism>
    <name type="scientific">Thermus thermophilus (strain ATCC 27634 / DSM 579 / HB8)</name>
    <dbReference type="NCBI Taxonomy" id="300852"/>
    <lineage>
        <taxon>Bacteria</taxon>
        <taxon>Thermotogati</taxon>
        <taxon>Deinococcota</taxon>
        <taxon>Deinococci</taxon>
        <taxon>Thermales</taxon>
        <taxon>Thermaceae</taxon>
        <taxon>Thermus</taxon>
    </lineage>
</organism>
<gene>
    <name evidence="1" type="primary">uppP</name>
    <name type="ordered locus">TTHA0172</name>
</gene>
<dbReference type="EC" id="3.6.1.27" evidence="1"/>
<dbReference type="EMBL" id="AP008226">
    <property type="protein sequence ID" value="BAD69995.1"/>
    <property type="molecule type" value="Genomic_DNA"/>
</dbReference>
<dbReference type="RefSeq" id="WP_011227754.1">
    <property type="nucleotide sequence ID" value="NC_006461.1"/>
</dbReference>
<dbReference type="RefSeq" id="YP_143438.1">
    <property type="nucleotide sequence ID" value="NC_006461.1"/>
</dbReference>
<dbReference type="SMR" id="Q5SLX1"/>
<dbReference type="EnsemblBacteria" id="BAD69995">
    <property type="protein sequence ID" value="BAD69995"/>
    <property type="gene ID" value="BAD69995"/>
</dbReference>
<dbReference type="GeneID" id="3169669"/>
<dbReference type="KEGG" id="ttj:TTHA0172"/>
<dbReference type="PATRIC" id="fig|300852.9.peg.170"/>
<dbReference type="eggNOG" id="COG1968">
    <property type="taxonomic scope" value="Bacteria"/>
</dbReference>
<dbReference type="HOGENOM" id="CLU_060296_2_0_0"/>
<dbReference type="PhylomeDB" id="Q5SLX1"/>
<dbReference type="Proteomes" id="UP000000532">
    <property type="component" value="Chromosome"/>
</dbReference>
<dbReference type="GO" id="GO:0005886">
    <property type="term" value="C:plasma membrane"/>
    <property type="evidence" value="ECO:0007669"/>
    <property type="project" value="UniProtKB-SubCell"/>
</dbReference>
<dbReference type="GO" id="GO:0050380">
    <property type="term" value="F:undecaprenyl-diphosphatase activity"/>
    <property type="evidence" value="ECO:0007669"/>
    <property type="project" value="UniProtKB-UniRule"/>
</dbReference>
<dbReference type="GO" id="GO:0071555">
    <property type="term" value="P:cell wall organization"/>
    <property type="evidence" value="ECO:0007669"/>
    <property type="project" value="UniProtKB-KW"/>
</dbReference>
<dbReference type="GO" id="GO:0009252">
    <property type="term" value="P:peptidoglycan biosynthetic process"/>
    <property type="evidence" value="ECO:0007669"/>
    <property type="project" value="UniProtKB-KW"/>
</dbReference>
<dbReference type="GO" id="GO:0008360">
    <property type="term" value="P:regulation of cell shape"/>
    <property type="evidence" value="ECO:0007669"/>
    <property type="project" value="UniProtKB-KW"/>
</dbReference>
<dbReference type="GO" id="GO:0046677">
    <property type="term" value="P:response to antibiotic"/>
    <property type="evidence" value="ECO:0007669"/>
    <property type="project" value="UniProtKB-UniRule"/>
</dbReference>
<dbReference type="HAMAP" id="MF_01006">
    <property type="entry name" value="Undec_diphosphatase"/>
    <property type="match status" value="1"/>
</dbReference>
<dbReference type="InterPro" id="IPR003824">
    <property type="entry name" value="UppP"/>
</dbReference>
<dbReference type="NCBIfam" id="TIGR00753">
    <property type="entry name" value="undec_PP_bacA"/>
    <property type="match status" value="1"/>
</dbReference>
<dbReference type="PANTHER" id="PTHR30622">
    <property type="entry name" value="UNDECAPRENYL-DIPHOSPHATASE"/>
    <property type="match status" value="1"/>
</dbReference>
<dbReference type="PANTHER" id="PTHR30622:SF3">
    <property type="entry name" value="UNDECAPRENYL-DIPHOSPHATASE"/>
    <property type="match status" value="1"/>
</dbReference>
<dbReference type="Pfam" id="PF02673">
    <property type="entry name" value="BacA"/>
    <property type="match status" value="1"/>
</dbReference>
<proteinExistence type="inferred from homology"/>
<evidence type="ECO:0000255" key="1">
    <source>
        <dbReference type="HAMAP-Rule" id="MF_01006"/>
    </source>
</evidence>
<protein>
    <recommendedName>
        <fullName evidence="1">Undecaprenyl-diphosphatase</fullName>
        <ecNumber evidence="1">3.6.1.27</ecNumber>
    </recommendedName>
    <alternativeName>
        <fullName evidence="1">Bacitracin resistance protein</fullName>
    </alternativeName>
    <alternativeName>
        <fullName evidence="1">Undecaprenyl pyrophosphate phosphatase</fullName>
    </alternativeName>
</protein>